<gene>
    <name type="primary">SSP120</name>
    <name type="ordered locus">YLR250W</name>
    <name type="ORF">L9672.4</name>
</gene>
<reference key="1">
    <citation type="journal article" date="1991" name="Gene">
        <title>Selection of secretory protein-encoding genes by fusion with PHO5 in Saccharomyces cerevisiae.</title>
        <authorList>
            <person name="Sidhu R.S."/>
            <person name="Mathewes S."/>
            <person name="Bollon A.P."/>
        </authorList>
    </citation>
    <scope>NUCLEOTIDE SEQUENCE [GENOMIC DNA]</scope>
</reference>
<reference key="2">
    <citation type="journal article" date="1997" name="Nature">
        <title>The nucleotide sequence of Saccharomyces cerevisiae chromosome XII.</title>
        <authorList>
            <person name="Johnston M."/>
            <person name="Hillier L.W."/>
            <person name="Riles L."/>
            <person name="Albermann K."/>
            <person name="Andre B."/>
            <person name="Ansorge W."/>
            <person name="Benes V."/>
            <person name="Brueckner M."/>
            <person name="Delius H."/>
            <person name="Dubois E."/>
            <person name="Duesterhoeft A."/>
            <person name="Entian K.-D."/>
            <person name="Floeth M."/>
            <person name="Goffeau A."/>
            <person name="Hebling U."/>
            <person name="Heumann K."/>
            <person name="Heuss-Neitzel D."/>
            <person name="Hilbert H."/>
            <person name="Hilger F."/>
            <person name="Kleine K."/>
            <person name="Koetter P."/>
            <person name="Louis E.J."/>
            <person name="Messenguy F."/>
            <person name="Mewes H.-W."/>
            <person name="Miosga T."/>
            <person name="Moestl D."/>
            <person name="Mueller-Auer S."/>
            <person name="Nentwich U."/>
            <person name="Obermaier B."/>
            <person name="Piravandi E."/>
            <person name="Pohl T.M."/>
            <person name="Portetelle D."/>
            <person name="Purnelle B."/>
            <person name="Rechmann S."/>
            <person name="Rieger M."/>
            <person name="Rinke M."/>
            <person name="Rose M."/>
            <person name="Scharfe M."/>
            <person name="Scherens B."/>
            <person name="Scholler P."/>
            <person name="Schwager C."/>
            <person name="Schwarz S."/>
            <person name="Underwood A.P."/>
            <person name="Urrestarazu L.A."/>
            <person name="Vandenbol M."/>
            <person name="Verhasselt P."/>
            <person name="Vierendeels F."/>
            <person name="Voet M."/>
            <person name="Volckaert G."/>
            <person name="Voss H."/>
            <person name="Wambutt R."/>
            <person name="Wedler E."/>
            <person name="Wedler H."/>
            <person name="Zimmermann F.K."/>
            <person name="Zollner A."/>
            <person name="Hani J."/>
            <person name="Hoheisel J.D."/>
        </authorList>
    </citation>
    <scope>NUCLEOTIDE SEQUENCE [LARGE SCALE GENOMIC DNA]</scope>
    <source>
        <strain>ATCC 204508 / S288c</strain>
    </source>
</reference>
<reference key="3">
    <citation type="journal article" date="2014" name="G3 (Bethesda)">
        <title>The reference genome sequence of Saccharomyces cerevisiae: Then and now.</title>
        <authorList>
            <person name="Engel S.R."/>
            <person name="Dietrich F.S."/>
            <person name="Fisk D.G."/>
            <person name="Binkley G."/>
            <person name="Balakrishnan R."/>
            <person name="Costanzo M.C."/>
            <person name="Dwight S.S."/>
            <person name="Hitz B.C."/>
            <person name="Karra K."/>
            <person name="Nash R.S."/>
            <person name="Weng S."/>
            <person name="Wong E.D."/>
            <person name="Lloyd P."/>
            <person name="Skrzypek M.S."/>
            <person name="Miyasato S.R."/>
            <person name="Simison M."/>
            <person name="Cherry J.M."/>
        </authorList>
    </citation>
    <scope>GENOME REANNOTATION</scope>
    <source>
        <strain>ATCC 204508 / S288c</strain>
    </source>
</reference>
<reference key="4">
    <citation type="journal article" date="2007" name="Genome Res.">
        <title>Approaching a complete repository of sequence-verified protein-encoding clones for Saccharomyces cerevisiae.</title>
        <authorList>
            <person name="Hu Y."/>
            <person name="Rolfs A."/>
            <person name="Bhullar B."/>
            <person name="Murthy T.V.S."/>
            <person name="Zhu C."/>
            <person name="Berger M.F."/>
            <person name="Camargo A.A."/>
            <person name="Kelley F."/>
            <person name="McCarron S."/>
            <person name="Jepson D."/>
            <person name="Richardson A."/>
            <person name="Raphael J."/>
            <person name="Moreira D."/>
            <person name="Taycher E."/>
            <person name="Zuo D."/>
            <person name="Mohr S."/>
            <person name="Kane M.F."/>
            <person name="Williamson J."/>
            <person name="Simpson A.J.G."/>
            <person name="Bulyk M.L."/>
            <person name="Harlow E."/>
            <person name="Marsischky G."/>
            <person name="Kolodner R.D."/>
            <person name="LaBaer J."/>
        </authorList>
    </citation>
    <scope>NUCLEOTIDE SEQUENCE [GENOMIC DNA]</scope>
    <source>
        <strain>ATCC 204508 / S288c</strain>
    </source>
</reference>
<reference key="5">
    <citation type="journal article" date="2003" name="Nature">
        <title>Global analysis of protein expression in yeast.</title>
        <authorList>
            <person name="Ghaemmaghami S."/>
            <person name="Huh W.-K."/>
            <person name="Bower K."/>
            <person name="Howson R.W."/>
            <person name="Belle A."/>
            <person name="Dephoure N."/>
            <person name="O'Shea E.K."/>
            <person name="Weissman J.S."/>
        </authorList>
    </citation>
    <scope>LEVEL OF PROTEIN EXPRESSION [LARGE SCALE ANALYSIS]</scope>
</reference>
<reference key="6">
    <citation type="journal article" date="2008" name="Mol. Cell. Proteomics">
        <title>A multidimensional chromatography technology for in-depth phosphoproteome analysis.</title>
        <authorList>
            <person name="Albuquerque C.P."/>
            <person name="Smolka M.B."/>
            <person name="Payne S.H."/>
            <person name="Bafna V."/>
            <person name="Eng J."/>
            <person name="Zhou H."/>
        </authorList>
    </citation>
    <scope>PHOSPHORYLATION [LARGE SCALE ANALYSIS] AT THR-212</scope>
    <scope>IDENTIFICATION BY MASS SPECTROMETRY [LARGE SCALE ANALYSIS]</scope>
</reference>
<proteinExistence type="evidence at protein level"/>
<feature type="signal peptide" evidence="1">
    <location>
        <begin position="1"/>
        <end position="22"/>
    </location>
</feature>
<feature type="chain" id="PRO_0000022420" description="Protein SSP120">
    <location>
        <begin position="23"/>
        <end position="234"/>
    </location>
</feature>
<feature type="domain" description="EF-hand 1" evidence="2">
    <location>
        <begin position="52"/>
        <end position="87"/>
    </location>
</feature>
<feature type="domain" description="EF-hand 2" evidence="2">
    <location>
        <begin position="108"/>
        <end position="143"/>
    </location>
</feature>
<feature type="modified residue" description="Phosphothreonine" evidence="4">
    <location>
        <position position="212"/>
    </location>
</feature>
<keyword id="KW-0597">Phosphoprotein</keyword>
<keyword id="KW-1185">Reference proteome</keyword>
<keyword id="KW-0677">Repeat</keyword>
<keyword id="KW-0732">Signal</keyword>
<evidence type="ECO:0000255" key="1"/>
<evidence type="ECO:0000255" key="2">
    <source>
        <dbReference type="PROSITE-ProRule" id="PRU00448"/>
    </source>
</evidence>
<evidence type="ECO:0000269" key="3">
    <source>
    </source>
</evidence>
<evidence type="ECO:0007744" key="4">
    <source>
    </source>
</evidence>
<comment type="miscellaneous">
    <text evidence="3">Present with 6900 molecules/cell in log phase SD medium.</text>
</comment>
<name>SS120_YEAST</name>
<organism>
    <name type="scientific">Saccharomyces cerevisiae (strain ATCC 204508 / S288c)</name>
    <name type="common">Baker's yeast</name>
    <dbReference type="NCBI Taxonomy" id="559292"/>
    <lineage>
        <taxon>Eukaryota</taxon>
        <taxon>Fungi</taxon>
        <taxon>Dikarya</taxon>
        <taxon>Ascomycota</taxon>
        <taxon>Saccharomycotina</taxon>
        <taxon>Saccharomycetes</taxon>
        <taxon>Saccharomycetales</taxon>
        <taxon>Saccharomycetaceae</taxon>
        <taxon>Saccharomyces</taxon>
    </lineage>
</organism>
<accession>P39931</accession>
<accession>D6VYP8</accession>
<protein>
    <recommendedName>
        <fullName>Protein SSP120</fullName>
    </recommendedName>
</protein>
<sequence length="234" mass="27289">MRFLRGFVFSLAFTLYKVTATAEIGSEINVENEAPPDGLSWEEWHMDHEHQLKDYTPETFFALHDIKKKGFLDENDILSLYGLNREEIVGAGDGMGQHDESEKIDNEMAKRVVSLIMRLLDVDDNTKITKEEYLQFAKRGNKFPDLGVGVGHHSDFELEYEIHHWNKFHKDKDPDVKVVHKEDIEHELLHHEHEIEHEEEIQRGASRATVITDDELESRIELKNIPEKFKNGIF</sequence>
<dbReference type="EMBL" id="M59382">
    <property type="protein sequence ID" value="AAA35068.1"/>
    <property type="molecule type" value="Genomic_DNA"/>
</dbReference>
<dbReference type="EMBL" id="U20865">
    <property type="protein sequence ID" value="AAB67390.1"/>
    <property type="molecule type" value="Genomic_DNA"/>
</dbReference>
<dbReference type="EMBL" id="AY558213">
    <property type="protein sequence ID" value="AAS56539.1"/>
    <property type="molecule type" value="Genomic_DNA"/>
</dbReference>
<dbReference type="EMBL" id="BK006945">
    <property type="protein sequence ID" value="DAA09564.1"/>
    <property type="molecule type" value="Genomic_DNA"/>
</dbReference>
<dbReference type="PIR" id="JH0483">
    <property type="entry name" value="JH0483"/>
</dbReference>
<dbReference type="RefSeq" id="NP_013351.1">
    <property type="nucleotide sequence ID" value="NM_001182137.1"/>
</dbReference>
<dbReference type="BioGRID" id="31518">
    <property type="interactions" value="164"/>
</dbReference>
<dbReference type="DIP" id="DIP-5286N"/>
<dbReference type="FunCoup" id="P39931">
    <property type="interactions" value="64"/>
</dbReference>
<dbReference type="IntAct" id="P39931">
    <property type="interactions" value="55"/>
</dbReference>
<dbReference type="STRING" id="4932.YLR250W"/>
<dbReference type="iPTMnet" id="P39931"/>
<dbReference type="PaxDb" id="4932-YLR250W"/>
<dbReference type="PeptideAtlas" id="P39931"/>
<dbReference type="EnsemblFungi" id="YLR250W_mRNA">
    <property type="protein sequence ID" value="YLR250W"/>
    <property type="gene ID" value="YLR250W"/>
</dbReference>
<dbReference type="GeneID" id="850952"/>
<dbReference type="KEGG" id="sce:YLR250W"/>
<dbReference type="AGR" id="SGD:S000004240"/>
<dbReference type="SGD" id="S000004240">
    <property type="gene designation" value="SSP120"/>
</dbReference>
<dbReference type="VEuPathDB" id="FungiDB:YLR250W"/>
<dbReference type="eggNOG" id="ENOG502QRFY">
    <property type="taxonomic scope" value="Eukaryota"/>
</dbReference>
<dbReference type="GeneTree" id="ENSGT00390000001927"/>
<dbReference type="HOGENOM" id="CLU_096561_1_0_1"/>
<dbReference type="InParanoid" id="P39931"/>
<dbReference type="OMA" id="ADWMTKH"/>
<dbReference type="OrthoDB" id="289247at2759"/>
<dbReference type="BioCyc" id="YEAST:G3O-32355-MONOMER"/>
<dbReference type="BioGRID-ORCS" id="850952">
    <property type="hits" value="0 hits in 10 CRISPR screens"/>
</dbReference>
<dbReference type="PRO" id="PR:P39931"/>
<dbReference type="Proteomes" id="UP000002311">
    <property type="component" value="Chromosome XII"/>
</dbReference>
<dbReference type="RNAct" id="P39931">
    <property type="molecule type" value="protein"/>
</dbReference>
<dbReference type="GO" id="GO:0005737">
    <property type="term" value="C:cytoplasm"/>
    <property type="evidence" value="ECO:0007005"/>
    <property type="project" value="SGD"/>
</dbReference>
<dbReference type="GO" id="GO:0005793">
    <property type="term" value="C:endoplasmic reticulum-Golgi intermediate compartment"/>
    <property type="evidence" value="ECO:0000318"/>
    <property type="project" value="GO_Central"/>
</dbReference>
<dbReference type="GO" id="GO:0000324">
    <property type="term" value="C:fungal-type vacuole"/>
    <property type="evidence" value="ECO:0007005"/>
    <property type="project" value="SGD"/>
</dbReference>
<dbReference type="GO" id="GO:0005509">
    <property type="term" value="F:calcium ion binding"/>
    <property type="evidence" value="ECO:0000318"/>
    <property type="project" value="GO_Central"/>
</dbReference>
<dbReference type="FunFam" id="1.10.238.10:FF:000309">
    <property type="entry name" value="Chromosome 21, whole genome shotgun sequence"/>
    <property type="match status" value="1"/>
</dbReference>
<dbReference type="Gene3D" id="1.10.238.10">
    <property type="entry name" value="EF-hand"/>
    <property type="match status" value="1"/>
</dbReference>
<dbReference type="InterPro" id="IPR011992">
    <property type="entry name" value="EF-hand-dom_pair"/>
</dbReference>
<dbReference type="InterPro" id="IPR002048">
    <property type="entry name" value="EF_hand_dom"/>
</dbReference>
<dbReference type="InterPro" id="IPR040250">
    <property type="entry name" value="Nucleobindin"/>
</dbReference>
<dbReference type="PANTHER" id="PTHR19237">
    <property type="entry name" value="NUCLEOBINDIN"/>
    <property type="match status" value="1"/>
</dbReference>
<dbReference type="PANTHER" id="PTHR19237:SF20">
    <property type="entry name" value="NUCLEOBINDIN 1"/>
    <property type="match status" value="1"/>
</dbReference>
<dbReference type="SUPFAM" id="SSF47473">
    <property type="entry name" value="EF-hand"/>
    <property type="match status" value="1"/>
</dbReference>
<dbReference type="PROSITE" id="PS50222">
    <property type="entry name" value="EF_HAND_2"/>
    <property type="match status" value="2"/>
</dbReference>